<feature type="chain" id="PRO_0000233010" description="Protein HBT1">
    <location>
        <begin position="1"/>
        <end position="1046"/>
    </location>
</feature>
<feature type="region of interest" description="Disordered" evidence="1">
    <location>
        <begin position="1"/>
        <end position="455"/>
    </location>
</feature>
<feature type="region of interest" description="Disordered" evidence="1">
    <location>
        <begin position="469"/>
        <end position="894"/>
    </location>
</feature>
<feature type="region of interest" description="Disordered" evidence="1">
    <location>
        <begin position="908"/>
        <end position="1046"/>
    </location>
</feature>
<feature type="compositionally biased region" description="Basic and acidic residues" evidence="1">
    <location>
        <begin position="81"/>
        <end position="96"/>
    </location>
</feature>
<feature type="compositionally biased region" description="Polar residues" evidence="1">
    <location>
        <begin position="98"/>
        <end position="149"/>
    </location>
</feature>
<feature type="compositionally biased region" description="Polar residues" evidence="1">
    <location>
        <begin position="175"/>
        <end position="191"/>
    </location>
</feature>
<feature type="compositionally biased region" description="Polar residues" evidence="1">
    <location>
        <begin position="228"/>
        <end position="301"/>
    </location>
</feature>
<feature type="compositionally biased region" description="Polar residues" evidence="1">
    <location>
        <begin position="327"/>
        <end position="341"/>
    </location>
</feature>
<feature type="compositionally biased region" description="Polar residues" evidence="1">
    <location>
        <begin position="389"/>
        <end position="408"/>
    </location>
</feature>
<feature type="compositionally biased region" description="Polar residues" evidence="1">
    <location>
        <begin position="420"/>
        <end position="429"/>
    </location>
</feature>
<feature type="compositionally biased region" description="Basic and acidic residues" evidence="1">
    <location>
        <begin position="430"/>
        <end position="455"/>
    </location>
</feature>
<feature type="compositionally biased region" description="Polar residues" evidence="1">
    <location>
        <begin position="488"/>
        <end position="498"/>
    </location>
</feature>
<feature type="compositionally biased region" description="Basic and acidic residues" evidence="1">
    <location>
        <begin position="529"/>
        <end position="538"/>
    </location>
</feature>
<feature type="compositionally biased region" description="Polar residues" evidence="1">
    <location>
        <begin position="548"/>
        <end position="559"/>
    </location>
</feature>
<feature type="compositionally biased region" description="Polar residues" evidence="1">
    <location>
        <begin position="570"/>
        <end position="582"/>
    </location>
</feature>
<feature type="compositionally biased region" description="Basic and acidic residues" evidence="1">
    <location>
        <begin position="586"/>
        <end position="597"/>
    </location>
</feature>
<feature type="compositionally biased region" description="Acidic residues" evidence="1">
    <location>
        <begin position="605"/>
        <end position="619"/>
    </location>
</feature>
<feature type="compositionally biased region" description="Basic and acidic residues" evidence="1">
    <location>
        <begin position="621"/>
        <end position="630"/>
    </location>
</feature>
<feature type="compositionally biased region" description="Polar residues" evidence="1">
    <location>
        <begin position="742"/>
        <end position="756"/>
    </location>
</feature>
<feature type="compositionally biased region" description="Basic and acidic residues" evidence="1">
    <location>
        <begin position="773"/>
        <end position="782"/>
    </location>
</feature>
<feature type="compositionally biased region" description="Polar residues" evidence="1">
    <location>
        <begin position="792"/>
        <end position="802"/>
    </location>
</feature>
<feature type="compositionally biased region" description="Polar residues" evidence="1">
    <location>
        <begin position="837"/>
        <end position="855"/>
    </location>
</feature>
<feature type="compositionally biased region" description="Basic and acidic residues" evidence="1">
    <location>
        <begin position="868"/>
        <end position="890"/>
    </location>
</feature>
<feature type="compositionally biased region" description="Polar residues" evidence="1">
    <location>
        <begin position="922"/>
        <end position="951"/>
    </location>
</feature>
<feature type="compositionally biased region" description="Low complexity" evidence="1">
    <location>
        <begin position="952"/>
        <end position="963"/>
    </location>
</feature>
<feature type="compositionally biased region" description="Basic residues" evidence="1">
    <location>
        <begin position="964"/>
        <end position="976"/>
    </location>
</feature>
<feature type="compositionally biased region" description="Acidic residues" evidence="1">
    <location>
        <begin position="1006"/>
        <end position="1019"/>
    </location>
</feature>
<feature type="modified residue" description="Phosphoserine" evidence="7">
    <location>
        <position position="41"/>
    </location>
</feature>
<feature type="modified residue" description="Phosphoserine" evidence="8">
    <location>
        <position position="303"/>
    </location>
</feature>
<feature type="modified residue" description="Phosphoserine" evidence="8">
    <location>
        <position position="363"/>
    </location>
</feature>
<feature type="modified residue" description="Phosphoserine" evidence="8">
    <location>
        <position position="491"/>
    </location>
</feature>
<feature type="modified residue" description="Phosphoserine" evidence="8">
    <location>
        <position position="561"/>
    </location>
</feature>
<feature type="modified residue" description="Phosphoserine" evidence="8">
    <location>
        <position position="671"/>
    </location>
</feature>
<feature type="modified residue" description="Phosphotyrosine" evidence="8">
    <location>
        <position position="855"/>
    </location>
</feature>
<feature type="modified residue" description="Phosphoserine" evidence="8">
    <location>
        <position position="857"/>
    </location>
</feature>
<feature type="modified residue" description="Phosphoserine" evidence="8">
    <location>
        <position position="1005"/>
    </location>
</feature>
<feature type="modified residue" description="Phosphoserine" evidence="5 6 8">
    <location>
        <position position="1034"/>
    </location>
</feature>
<accession>Q07653</accession>
<accession>D6VRD2</accession>
<protein>
    <recommendedName>
        <fullName>Protein HBT1</fullName>
    </recommendedName>
    <alternativeName>
        <fullName>HUB1 target protein 1</fullName>
    </alternativeName>
</protein>
<evidence type="ECO:0000256" key="1">
    <source>
        <dbReference type="SAM" id="MobiDB-lite"/>
    </source>
</evidence>
<evidence type="ECO:0000269" key="2">
    <source>
    </source>
</evidence>
<evidence type="ECO:0000269" key="3">
    <source>
    </source>
</evidence>
<evidence type="ECO:0000269" key="4">
    <source>
    </source>
</evidence>
<evidence type="ECO:0007744" key="5">
    <source>
    </source>
</evidence>
<evidence type="ECO:0007744" key="6">
    <source>
    </source>
</evidence>
<evidence type="ECO:0007744" key="7">
    <source>
    </source>
</evidence>
<evidence type="ECO:0007744" key="8">
    <source>
    </source>
</evidence>
<organism>
    <name type="scientific">Saccharomyces cerevisiae (strain ATCC 204508 / S288c)</name>
    <name type="common">Baker's yeast</name>
    <dbReference type="NCBI Taxonomy" id="559292"/>
    <lineage>
        <taxon>Eukaryota</taxon>
        <taxon>Fungi</taxon>
        <taxon>Dikarya</taxon>
        <taxon>Ascomycota</taxon>
        <taxon>Saccharomycotina</taxon>
        <taxon>Saccharomycetes</taxon>
        <taxon>Saccharomycetales</taxon>
        <taxon>Saccharomycetaceae</taxon>
        <taxon>Saccharomyces</taxon>
    </lineage>
</organism>
<gene>
    <name type="primary">HBT1</name>
    <name type="synonym">Crem</name>
    <name type="ordered locus">YDL223C</name>
</gene>
<keyword id="KW-0133">Cell shape</keyword>
<keyword id="KW-0184">Conjugation</keyword>
<keyword id="KW-0963">Cytoplasm</keyword>
<keyword id="KW-0597">Phosphoprotein</keyword>
<keyword id="KW-1185">Reference proteome</keyword>
<dbReference type="EMBL" id="Z74271">
    <property type="protein sequence ID" value="CAA98802.1"/>
    <property type="molecule type" value="Genomic_DNA"/>
</dbReference>
<dbReference type="EMBL" id="BK006938">
    <property type="protein sequence ID" value="DAA11642.1"/>
    <property type="molecule type" value="Genomic_DNA"/>
</dbReference>
<dbReference type="PIR" id="S67786">
    <property type="entry name" value="S67786"/>
</dbReference>
<dbReference type="RefSeq" id="NP_010058.1">
    <property type="nucleotide sequence ID" value="NM_001180283.1"/>
</dbReference>
<dbReference type="BioGRID" id="31823">
    <property type="interactions" value="183"/>
</dbReference>
<dbReference type="FunCoup" id="Q07653">
    <property type="interactions" value="102"/>
</dbReference>
<dbReference type="IntAct" id="Q07653">
    <property type="interactions" value="60"/>
</dbReference>
<dbReference type="STRING" id="4932.YDL223C"/>
<dbReference type="CarbonylDB" id="Q07653"/>
<dbReference type="GlyGen" id="Q07653">
    <property type="glycosylation" value="8 sites, 1 O-linked glycan (7 sites)"/>
</dbReference>
<dbReference type="iPTMnet" id="Q07653"/>
<dbReference type="PaxDb" id="4932-YDL223C"/>
<dbReference type="PeptideAtlas" id="Q07653"/>
<dbReference type="TopDownProteomics" id="Q07653"/>
<dbReference type="EnsemblFungi" id="YDL223C_mRNA">
    <property type="protein sequence ID" value="YDL223C"/>
    <property type="gene ID" value="YDL223C"/>
</dbReference>
<dbReference type="GeneID" id="851303"/>
<dbReference type="KEGG" id="sce:YDL223C"/>
<dbReference type="AGR" id="SGD:S000002382"/>
<dbReference type="SGD" id="S000002382">
    <property type="gene designation" value="HBT1"/>
</dbReference>
<dbReference type="VEuPathDB" id="FungiDB:YDL223C"/>
<dbReference type="eggNOG" id="ENOG502SEJI">
    <property type="taxonomic scope" value="Eukaryota"/>
</dbReference>
<dbReference type="HOGENOM" id="CLU_012135_0_0_1"/>
<dbReference type="InParanoid" id="Q07653"/>
<dbReference type="OMA" id="QSEDHGT"/>
<dbReference type="OrthoDB" id="4055124at2759"/>
<dbReference type="BioCyc" id="YEAST:G3O-29603-MONOMER"/>
<dbReference type="BioGRID-ORCS" id="851303">
    <property type="hits" value="0 hits in 10 CRISPR screens"/>
</dbReference>
<dbReference type="PRO" id="PR:Q07653"/>
<dbReference type="Proteomes" id="UP000002311">
    <property type="component" value="Chromosome IV"/>
</dbReference>
<dbReference type="RNAct" id="Q07653">
    <property type="molecule type" value="protein"/>
</dbReference>
<dbReference type="GO" id="GO:0005737">
    <property type="term" value="C:cytoplasm"/>
    <property type="evidence" value="ECO:0007669"/>
    <property type="project" value="UniProtKB-SubCell"/>
</dbReference>
<dbReference type="GO" id="GO:0005937">
    <property type="term" value="C:mating projection"/>
    <property type="evidence" value="ECO:0000314"/>
    <property type="project" value="SGD"/>
</dbReference>
<dbReference type="GO" id="GO:0005886">
    <property type="term" value="C:plasma membrane"/>
    <property type="evidence" value="ECO:0007005"/>
    <property type="project" value="SGD"/>
</dbReference>
<dbReference type="GO" id="GO:0000753">
    <property type="term" value="P:cell morphogenesis involved in conjugation with cellular fusion"/>
    <property type="evidence" value="ECO:0000315"/>
    <property type="project" value="SGD"/>
</dbReference>
<dbReference type="GO" id="GO:0008360">
    <property type="term" value="P:regulation of cell shape"/>
    <property type="evidence" value="ECO:0007669"/>
    <property type="project" value="UniProtKB-KW"/>
</dbReference>
<reference key="1">
    <citation type="journal article" date="1997" name="Nature">
        <title>The nucleotide sequence of Saccharomyces cerevisiae chromosome IV.</title>
        <authorList>
            <person name="Jacq C."/>
            <person name="Alt-Moerbe J."/>
            <person name="Andre B."/>
            <person name="Arnold W."/>
            <person name="Bahr A."/>
            <person name="Ballesta J.P.G."/>
            <person name="Bargues M."/>
            <person name="Baron L."/>
            <person name="Becker A."/>
            <person name="Biteau N."/>
            <person name="Bloecker H."/>
            <person name="Blugeon C."/>
            <person name="Boskovic J."/>
            <person name="Brandt P."/>
            <person name="Brueckner M."/>
            <person name="Buitrago M.J."/>
            <person name="Coster F."/>
            <person name="Delaveau T."/>
            <person name="del Rey F."/>
            <person name="Dujon B."/>
            <person name="Eide L.G."/>
            <person name="Garcia-Cantalejo J.M."/>
            <person name="Goffeau A."/>
            <person name="Gomez-Peris A."/>
            <person name="Granotier C."/>
            <person name="Hanemann V."/>
            <person name="Hankeln T."/>
            <person name="Hoheisel J.D."/>
            <person name="Jaeger W."/>
            <person name="Jimenez A."/>
            <person name="Jonniaux J.-L."/>
            <person name="Kraemer C."/>
            <person name="Kuester H."/>
            <person name="Laamanen P."/>
            <person name="Legros Y."/>
            <person name="Louis E.J."/>
            <person name="Moeller-Rieker S."/>
            <person name="Monnet A."/>
            <person name="Moro M."/>
            <person name="Mueller-Auer S."/>
            <person name="Nussbaumer B."/>
            <person name="Paricio N."/>
            <person name="Paulin L."/>
            <person name="Perea J."/>
            <person name="Perez-Alonso M."/>
            <person name="Perez-Ortin J.E."/>
            <person name="Pohl T.M."/>
            <person name="Prydz H."/>
            <person name="Purnelle B."/>
            <person name="Rasmussen S.W."/>
            <person name="Remacha M.A."/>
            <person name="Revuelta J.L."/>
            <person name="Rieger M."/>
            <person name="Salom D."/>
            <person name="Saluz H.P."/>
            <person name="Saiz J.E."/>
            <person name="Saren A.-M."/>
            <person name="Schaefer M."/>
            <person name="Scharfe M."/>
            <person name="Schmidt E.R."/>
            <person name="Schneider C."/>
            <person name="Scholler P."/>
            <person name="Schwarz S."/>
            <person name="Soler-Mira A."/>
            <person name="Urrestarazu L.A."/>
            <person name="Verhasselt P."/>
            <person name="Vissers S."/>
            <person name="Voet M."/>
            <person name="Volckaert G."/>
            <person name="Wagner G."/>
            <person name="Wambutt R."/>
            <person name="Wedler E."/>
            <person name="Wedler H."/>
            <person name="Woelfl S."/>
            <person name="Harris D.E."/>
            <person name="Bowman S."/>
            <person name="Brown D."/>
            <person name="Churcher C.M."/>
            <person name="Connor R."/>
            <person name="Dedman K."/>
            <person name="Gentles S."/>
            <person name="Hamlin N."/>
            <person name="Hunt S."/>
            <person name="Jones L."/>
            <person name="McDonald S."/>
            <person name="Murphy L.D."/>
            <person name="Niblett D."/>
            <person name="Odell C."/>
            <person name="Oliver K."/>
            <person name="Rajandream M.A."/>
            <person name="Richards C."/>
            <person name="Shore L."/>
            <person name="Walsh S.V."/>
            <person name="Barrell B.G."/>
            <person name="Dietrich F.S."/>
            <person name="Mulligan J.T."/>
            <person name="Allen E."/>
            <person name="Araujo R."/>
            <person name="Aviles E."/>
            <person name="Berno A."/>
            <person name="Carpenter J."/>
            <person name="Chen E."/>
            <person name="Cherry J.M."/>
            <person name="Chung E."/>
            <person name="Duncan M."/>
            <person name="Hunicke-Smith S."/>
            <person name="Hyman R.W."/>
            <person name="Komp C."/>
            <person name="Lashkari D."/>
            <person name="Lew H."/>
            <person name="Lin D."/>
            <person name="Mosedale D."/>
            <person name="Nakahara K."/>
            <person name="Namath A."/>
            <person name="Oefner P."/>
            <person name="Oh C."/>
            <person name="Petel F.X."/>
            <person name="Roberts D."/>
            <person name="Schramm S."/>
            <person name="Schroeder M."/>
            <person name="Shogren T."/>
            <person name="Shroff N."/>
            <person name="Winant A."/>
            <person name="Yelton M.A."/>
            <person name="Botstein D."/>
            <person name="Davis R.W."/>
            <person name="Johnston M."/>
            <person name="Andrews S."/>
            <person name="Brinkman R."/>
            <person name="Cooper J."/>
            <person name="Ding H."/>
            <person name="Du Z."/>
            <person name="Favello A."/>
            <person name="Fulton L."/>
            <person name="Gattung S."/>
            <person name="Greco T."/>
            <person name="Hallsworth K."/>
            <person name="Hawkins J."/>
            <person name="Hillier L.W."/>
            <person name="Jier M."/>
            <person name="Johnson D."/>
            <person name="Johnston L."/>
            <person name="Kirsten J."/>
            <person name="Kucaba T."/>
            <person name="Langston Y."/>
            <person name="Latreille P."/>
            <person name="Le T."/>
            <person name="Mardis E."/>
            <person name="Menezes S."/>
            <person name="Miller N."/>
            <person name="Nhan M."/>
            <person name="Pauley A."/>
            <person name="Peluso D."/>
            <person name="Rifkin L."/>
            <person name="Riles L."/>
            <person name="Taich A."/>
            <person name="Trevaskis E."/>
            <person name="Vignati D."/>
            <person name="Wilcox L."/>
            <person name="Wohldman P."/>
            <person name="Vaudin M."/>
            <person name="Wilson R."/>
            <person name="Waterston R."/>
            <person name="Albermann K."/>
            <person name="Hani J."/>
            <person name="Heumann K."/>
            <person name="Kleine K."/>
            <person name="Mewes H.-W."/>
            <person name="Zollner A."/>
            <person name="Zaccaria P."/>
        </authorList>
    </citation>
    <scope>NUCLEOTIDE SEQUENCE [LARGE SCALE GENOMIC DNA]</scope>
    <source>
        <strain>ATCC 204508 / S288c</strain>
    </source>
</reference>
<reference key="2">
    <citation type="journal article" date="2014" name="G3 (Bethesda)">
        <title>The reference genome sequence of Saccharomyces cerevisiae: Then and now.</title>
        <authorList>
            <person name="Engel S.R."/>
            <person name="Dietrich F.S."/>
            <person name="Fisk D.G."/>
            <person name="Binkley G."/>
            <person name="Balakrishnan R."/>
            <person name="Costanzo M.C."/>
            <person name="Dwight S.S."/>
            <person name="Hitz B.C."/>
            <person name="Karra K."/>
            <person name="Nash R.S."/>
            <person name="Weng S."/>
            <person name="Wong E.D."/>
            <person name="Lloyd P."/>
            <person name="Skrzypek M.S."/>
            <person name="Miyasato S.R."/>
            <person name="Simison M."/>
            <person name="Cherry J.M."/>
        </authorList>
    </citation>
    <scope>GENOME REANNOTATION</scope>
    <source>
        <strain>ATCC 204508 / S288c</strain>
    </source>
</reference>
<reference key="3">
    <citation type="journal article" date="2002" name="Science">
        <title>Role of a ubiquitin-like modification in polarized morphogenesis.</title>
        <authorList>
            <person name="Dittmar G.A.G."/>
            <person name="Wilkinson C.R.M."/>
            <person name="Jedrzejewski P.T."/>
            <person name="Finley D."/>
        </authorList>
    </citation>
    <scope>FUNCTION</scope>
    <scope>IDENTIFICATION BY MASS SPECTROMETRY</scope>
    <scope>CONJUGATION TO HUB1</scope>
</reference>
<reference key="4">
    <citation type="journal article" date="2003" name="Nature">
        <title>Global analysis of protein localization in budding yeast.</title>
        <authorList>
            <person name="Huh W.-K."/>
            <person name="Falvo J.V."/>
            <person name="Gerke L.C."/>
            <person name="Carroll A.S."/>
            <person name="Howson R.W."/>
            <person name="Weissman J.S."/>
            <person name="O'Shea E.K."/>
        </authorList>
    </citation>
    <scope>SUBCELLULAR LOCATION [LARGE SCALE ANALYSIS]</scope>
</reference>
<reference key="5">
    <citation type="journal article" date="2004" name="Mol. Biol. Cell">
        <title>Genomic analysis of stationary-phase and exit in Saccharomyces cerevisiae: gene expression and identification of novel essential genes.</title>
        <authorList>
            <person name="Martinez M.J."/>
            <person name="Roy S."/>
            <person name="Archuletta A.B."/>
            <person name="Wentzell P.D."/>
            <person name="Anna-Arriola S.S."/>
            <person name="Rodriguez A.L."/>
            <person name="Aragon A.D."/>
            <person name="Quinones G.A."/>
            <person name="Allen C."/>
            <person name="Werner-Washburne M."/>
        </authorList>
    </citation>
    <scope>FUNCTION</scope>
</reference>
<reference key="6">
    <citation type="journal article" date="2005" name="Mol. Cell. Proteomics">
        <title>Quantitative phosphoproteomics applied to the yeast pheromone signaling pathway.</title>
        <authorList>
            <person name="Gruhler A."/>
            <person name="Olsen J.V."/>
            <person name="Mohammed S."/>
            <person name="Mortensen P."/>
            <person name="Faergeman N.J."/>
            <person name="Mann M."/>
            <person name="Jensen O.N."/>
        </authorList>
    </citation>
    <scope>PHOSPHORYLATION [LARGE SCALE ANALYSIS] AT SER-1034</scope>
    <scope>IDENTIFICATION BY MASS SPECTROMETRY [LARGE SCALE ANALYSIS]</scope>
    <source>
        <strain>YAL6B</strain>
    </source>
</reference>
<reference key="7">
    <citation type="journal article" date="2007" name="J. Proteome Res.">
        <title>Large-scale phosphorylation analysis of alpha-factor-arrested Saccharomyces cerevisiae.</title>
        <authorList>
            <person name="Li X."/>
            <person name="Gerber S.A."/>
            <person name="Rudner A.D."/>
            <person name="Beausoleil S.A."/>
            <person name="Haas W."/>
            <person name="Villen J."/>
            <person name="Elias J.E."/>
            <person name="Gygi S.P."/>
        </authorList>
    </citation>
    <scope>PHOSPHORYLATION [LARGE SCALE ANALYSIS] AT SER-1034</scope>
    <scope>IDENTIFICATION BY MASS SPECTROMETRY [LARGE SCALE ANALYSIS]</scope>
    <source>
        <strain>ADR376</strain>
    </source>
</reference>
<reference key="8">
    <citation type="journal article" date="2007" name="Proc. Natl. Acad. Sci. U.S.A.">
        <title>Analysis of phosphorylation sites on proteins from Saccharomyces cerevisiae by electron transfer dissociation (ETD) mass spectrometry.</title>
        <authorList>
            <person name="Chi A."/>
            <person name="Huttenhower C."/>
            <person name="Geer L.Y."/>
            <person name="Coon J.J."/>
            <person name="Syka J.E.P."/>
            <person name="Bai D.L."/>
            <person name="Shabanowitz J."/>
            <person name="Burke D.J."/>
            <person name="Troyanskaya O.G."/>
            <person name="Hunt D.F."/>
        </authorList>
    </citation>
    <scope>IDENTIFICATION BY MASS SPECTROMETRY [LARGE SCALE ANALYSIS]</scope>
</reference>
<reference key="9">
    <citation type="journal article" date="2008" name="Mol. Cell. Proteomics">
        <title>A multidimensional chromatography technology for in-depth phosphoproteome analysis.</title>
        <authorList>
            <person name="Albuquerque C.P."/>
            <person name="Smolka M.B."/>
            <person name="Payne S.H."/>
            <person name="Bafna V."/>
            <person name="Eng J."/>
            <person name="Zhou H."/>
        </authorList>
    </citation>
    <scope>PHOSPHORYLATION [LARGE SCALE ANALYSIS] AT SER-41</scope>
    <scope>IDENTIFICATION BY MASS SPECTROMETRY [LARGE SCALE ANALYSIS]</scope>
</reference>
<reference key="10">
    <citation type="journal article" date="2009" name="Science">
        <title>Global analysis of Cdk1 substrate phosphorylation sites provides insights into evolution.</title>
        <authorList>
            <person name="Holt L.J."/>
            <person name="Tuch B.B."/>
            <person name="Villen J."/>
            <person name="Johnson A.D."/>
            <person name="Gygi S.P."/>
            <person name="Morgan D.O."/>
        </authorList>
    </citation>
    <scope>PHOSPHORYLATION [LARGE SCALE ANALYSIS] AT SER-303; SER-363; SER-491; SER-561; SER-671; TYR-855; SER-857; SER-1005 AND SER-1034</scope>
    <scope>IDENTIFICATION BY MASS SPECTROMETRY [LARGE SCALE ANALYSIS]</scope>
</reference>
<comment type="function">
    <text evidence="2 4">Polarity-determining protein which forms a conjugate with the ubiquitin-like modifier HUB1. Involved in bud site selection and cellular morphogenesis during conjugation. Required for survival during stationary phase.</text>
</comment>
<comment type="subunit">
    <text>Conjugated with HUB1. HUB1 has not the classical C-terminal Gly residue, so it is still unknown how conjugation may occur.</text>
</comment>
<comment type="subcellular location">
    <subcellularLocation>
        <location evidence="3">Cytoplasm</location>
    </subcellularLocation>
</comment>
<name>HBT1_YEAST</name>
<sequence>MNMNESISKDGQGEEEQNNFSFGGKPGSYDSNSDSAQRKKSFSTTKPTEYNLPKEQPESTSKNLETKAKNILLPWRKKHNKDSETPHEDTEADANRRANVTSDVNPVSADTKSSSGPNATITTHGYSYVKTTTPAATSEQSKVKTSPPTSHEHSNIKASPTAHRHSKGDAGHPSIATTHNHSTSKAATSPVTHTHGHSSATTSPVTHTHGHASVKTTSPTNTHEHSKANTGPSATATTHGHINVKTTHPVSHGHSGSSTGPKSTAAAQDHSSTKTNPSVTHGHTSVKDNSSATKGYSNTDSNSDRDVIPGSFRGMTGTDVNPVDPSVYTSTGPKSNVSSGMNAVDPSVYTDTSSKSADRRKYSGNTATGPPQDTIKEIAQNVKMDESEQTGLKNDQVSGSDAIQQQTMEPEPKAAVGTSGFVSQQPSYHDSNKNIQHPEKNKVDNKNISERAAEKFNIERDDILESADDYQQKNIKSKTDSNWGPIEYSSSAGKNKNLQDVVIPSSMKEKFDSGTSGSQNMPKAGTELGHMKYNDNGRDNLQYVAGSQAGSQNTNNNIDMSPRHEAEWSGLSNDATTRNNVVSPAMKDEDMNEDSTKPHQYGLDYLDDVEDYHENDIDDYSNAKKNDLYSKKAYQGKPSDYNYEQREKIPGTFEPDTLSKSVQKQDEDPLSPRQTTNRAGMETARDESLGNYEYSNTSGNKKLSDLSKNKSGPTPTRSNFIDQIEPRRAKTTQDIASDAKDFTNNPETGTTGNVDTTGRMGAKSKTFSSNPFDDSKNTDTHLENANVAAFDNSRSGDTTYSKSGDAETAAYDNIKNADPTYAKSQDITGMTHDQEPSSEQKASYGSGGNSQNQEYSSDDNIDVNKNAKVLEEDAPGYKREVDLKNKRRTDLGGADASNAYAAEVGNFPSLIDPHVPTYGFKDTNTSSSQKPSEGTYPETTSYSIHNETTSQGRKVSVGSMGSGKSKHHHNHHRHSRQNSSKGSDYDYNNSTHSAEHTPRHHQYGSDEGEQDYHDDEQGEEQAGKQSFMGRVRKSISGGTFGFRSEI</sequence>
<proteinExistence type="evidence at protein level"/>